<gene>
    <name evidence="1" type="primary">leuA</name>
    <name type="ordered locus">Bmul_1018</name>
    <name type="ordered locus">BMULJ_02246</name>
</gene>
<keyword id="KW-0028">Amino-acid biosynthesis</keyword>
<keyword id="KW-0100">Branched-chain amino acid biosynthesis</keyword>
<keyword id="KW-0963">Cytoplasm</keyword>
<keyword id="KW-0432">Leucine biosynthesis</keyword>
<keyword id="KW-0464">Manganese</keyword>
<keyword id="KW-0479">Metal-binding</keyword>
<keyword id="KW-1185">Reference proteome</keyword>
<keyword id="KW-0808">Transferase</keyword>
<evidence type="ECO:0000255" key="1">
    <source>
        <dbReference type="HAMAP-Rule" id="MF_01025"/>
    </source>
</evidence>
<feature type="chain" id="PRO_1000149150" description="2-isopropylmalate synthase">
    <location>
        <begin position="1"/>
        <end position="514"/>
    </location>
</feature>
<feature type="domain" description="Pyruvate carboxyltransferase" evidence="1">
    <location>
        <begin position="5"/>
        <end position="268"/>
    </location>
</feature>
<feature type="region of interest" description="Regulatory domain" evidence="1">
    <location>
        <begin position="395"/>
        <end position="514"/>
    </location>
</feature>
<feature type="binding site" evidence="1">
    <location>
        <position position="14"/>
    </location>
    <ligand>
        <name>Mn(2+)</name>
        <dbReference type="ChEBI" id="CHEBI:29035"/>
    </ligand>
</feature>
<feature type="binding site" evidence="1">
    <location>
        <position position="202"/>
    </location>
    <ligand>
        <name>Mn(2+)</name>
        <dbReference type="ChEBI" id="CHEBI:29035"/>
    </ligand>
</feature>
<feature type="binding site" evidence="1">
    <location>
        <position position="204"/>
    </location>
    <ligand>
        <name>Mn(2+)</name>
        <dbReference type="ChEBI" id="CHEBI:29035"/>
    </ligand>
</feature>
<feature type="binding site" evidence="1">
    <location>
        <position position="239"/>
    </location>
    <ligand>
        <name>Mn(2+)</name>
        <dbReference type="ChEBI" id="CHEBI:29035"/>
    </ligand>
</feature>
<organism>
    <name type="scientific">Burkholderia multivorans (strain ATCC 17616 / 249)</name>
    <dbReference type="NCBI Taxonomy" id="395019"/>
    <lineage>
        <taxon>Bacteria</taxon>
        <taxon>Pseudomonadati</taxon>
        <taxon>Pseudomonadota</taxon>
        <taxon>Betaproteobacteria</taxon>
        <taxon>Burkholderiales</taxon>
        <taxon>Burkholderiaceae</taxon>
        <taxon>Burkholderia</taxon>
        <taxon>Burkholderia cepacia complex</taxon>
    </lineage>
</organism>
<protein>
    <recommendedName>
        <fullName evidence="1">2-isopropylmalate synthase</fullName>
        <ecNumber evidence="1">2.3.3.13</ecNumber>
    </recommendedName>
    <alternativeName>
        <fullName evidence="1">Alpha-IPM synthase</fullName>
    </alternativeName>
    <alternativeName>
        <fullName evidence="1">Alpha-isopropylmalate synthase</fullName>
    </alternativeName>
</protein>
<proteinExistence type="inferred from homology"/>
<reference key="1">
    <citation type="submission" date="2007-10" db="EMBL/GenBank/DDBJ databases">
        <title>Complete sequence of chromosome 1 of Burkholderia multivorans ATCC 17616.</title>
        <authorList>
            <person name="Copeland A."/>
            <person name="Lucas S."/>
            <person name="Lapidus A."/>
            <person name="Barry K."/>
            <person name="Glavina del Rio T."/>
            <person name="Dalin E."/>
            <person name="Tice H."/>
            <person name="Pitluck S."/>
            <person name="Chain P."/>
            <person name="Malfatti S."/>
            <person name="Shin M."/>
            <person name="Vergez L."/>
            <person name="Schmutz J."/>
            <person name="Larimer F."/>
            <person name="Land M."/>
            <person name="Hauser L."/>
            <person name="Kyrpides N."/>
            <person name="Kim E."/>
            <person name="Tiedje J."/>
            <person name="Richardson P."/>
        </authorList>
    </citation>
    <scope>NUCLEOTIDE SEQUENCE [LARGE SCALE GENOMIC DNA]</scope>
    <source>
        <strain>ATCC 17616 / 249</strain>
    </source>
</reference>
<reference key="2">
    <citation type="submission" date="2007-04" db="EMBL/GenBank/DDBJ databases">
        <title>Complete genome sequence of Burkholderia multivorans ATCC 17616.</title>
        <authorList>
            <person name="Ohtsubo Y."/>
            <person name="Yamashita A."/>
            <person name="Kurokawa K."/>
            <person name="Takami H."/>
            <person name="Yuhara S."/>
            <person name="Nishiyama E."/>
            <person name="Endo R."/>
            <person name="Miyazaki R."/>
            <person name="Ono A."/>
            <person name="Yano K."/>
            <person name="Ito M."/>
            <person name="Sota M."/>
            <person name="Yuji N."/>
            <person name="Hattori M."/>
            <person name="Tsuda M."/>
        </authorList>
    </citation>
    <scope>NUCLEOTIDE SEQUENCE [LARGE SCALE GENOMIC DNA]</scope>
    <source>
        <strain>ATCC 17616 / 249</strain>
    </source>
</reference>
<name>LEU1_BURM1</name>
<dbReference type="EC" id="2.3.3.13" evidence="1"/>
<dbReference type="EMBL" id="CP000868">
    <property type="protein sequence ID" value="ABX14709.1"/>
    <property type="molecule type" value="Genomic_DNA"/>
</dbReference>
<dbReference type="EMBL" id="AP009385">
    <property type="protein sequence ID" value="BAG44141.1"/>
    <property type="molecule type" value="Genomic_DNA"/>
</dbReference>
<dbReference type="RefSeq" id="WP_006398785.1">
    <property type="nucleotide sequence ID" value="NC_010804.1"/>
</dbReference>
<dbReference type="SMR" id="A9AJN4"/>
<dbReference type="STRING" id="395019.BMULJ_02246"/>
<dbReference type="KEGG" id="bmj:BMULJ_02246"/>
<dbReference type="KEGG" id="bmu:Bmul_1018"/>
<dbReference type="eggNOG" id="COG0119">
    <property type="taxonomic scope" value="Bacteria"/>
</dbReference>
<dbReference type="HOGENOM" id="CLU_022158_0_1_4"/>
<dbReference type="UniPathway" id="UPA00048">
    <property type="reaction ID" value="UER00070"/>
</dbReference>
<dbReference type="Proteomes" id="UP000008815">
    <property type="component" value="Chromosome 1"/>
</dbReference>
<dbReference type="GO" id="GO:0005829">
    <property type="term" value="C:cytosol"/>
    <property type="evidence" value="ECO:0007669"/>
    <property type="project" value="TreeGrafter"/>
</dbReference>
<dbReference type="GO" id="GO:0003852">
    <property type="term" value="F:2-isopropylmalate synthase activity"/>
    <property type="evidence" value="ECO:0007669"/>
    <property type="project" value="UniProtKB-UniRule"/>
</dbReference>
<dbReference type="GO" id="GO:0003985">
    <property type="term" value="F:acetyl-CoA C-acetyltransferase activity"/>
    <property type="evidence" value="ECO:0007669"/>
    <property type="project" value="UniProtKB-UniRule"/>
</dbReference>
<dbReference type="GO" id="GO:0030145">
    <property type="term" value="F:manganese ion binding"/>
    <property type="evidence" value="ECO:0007669"/>
    <property type="project" value="UniProtKB-UniRule"/>
</dbReference>
<dbReference type="GO" id="GO:0009098">
    <property type="term" value="P:L-leucine biosynthetic process"/>
    <property type="evidence" value="ECO:0007669"/>
    <property type="project" value="UniProtKB-UniRule"/>
</dbReference>
<dbReference type="CDD" id="cd07940">
    <property type="entry name" value="DRE_TIM_IPMS"/>
    <property type="match status" value="1"/>
</dbReference>
<dbReference type="FunFam" id="1.10.238.260:FF:000001">
    <property type="entry name" value="2-isopropylmalate synthase"/>
    <property type="match status" value="1"/>
</dbReference>
<dbReference type="FunFam" id="3.20.20.70:FF:000010">
    <property type="entry name" value="2-isopropylmalate synthase"/>
    <property type="match status" value="1"/>
</dbReference>
<dbReference type="FunFam" id="3.30.160.270:FF:000003">
    <property type="entry name" value="2-isopropylmalate synthase"/>
    <property type="match status" value="1"/>
</dbReference>
<dbReference type="Gene3D" id="1.10.238.260">
    <property type="match status" value="1"/>
</dbReference>
<dbReference type="Gene3D" id="3.30.160.270">
    <property type="match status" value="1"/>
</dbReference>
<dbReference type="Gene3D" id="3.20.20.70">
    <property type="entry name" value="Aldolase class I"/>
    <property type="match status" value="1"/>
</dbReference>
<dbReference type="HAMAP" id="MF_01025">
    <property type="entry name" value="LeuA_type1"/>
    <property type="match status" value="1"/>
</dbReference>
<dbReference type="InterPro" id="IPR050073">
    <property type="entry name" value="2-IPM_HCS-like"/>
</dbReference>
<dbReference type="InterPro" id="IPR013709">
    <property type="entry name" value="2-isopropylmalate_synth_dimer"/>
</dbReference>
<dbReference type="InterPro" id="IPR002034">
    <property type="entry name" value="AIPM/Hcit_synth_CS"/>
</dbReference>
<dbReference type="InterPro" id="IPR013785">
    <property type="entry name" value="Aldolase_TIM"/>
</dbReference>
<dbReference type="InterPro" id="IPR054691">
    <property type="entry name" value="LeuA/HCS_post-cat"/>
</dbReference>
<dbReference type="InterPro" id="IPR036230">
    <property type="entry name" value="LeuA_allosteric_dom_sf"/>
</dbReference>
<dbReference type="InterPro" id="IPR005671">
    <property type="entry name" value="LeuA_bact_synth"/>
</dbReference>
<dbReference type="InterPro" id="IPR000891">
    <property type="entry name" value="PYR_CT"/>
</dbReference>
<dbReference type="NCBIfam" id="TIGR00973">
    <property type="entry name" value="leuA_bact"/>
    <property type="match status" value="1"/>
</dbReference>
<dbReference type="NCBIfam" id="NF002086">
    <property type="entry name" value="PRK00915.1-3"/>
    <property type="match status" value="1"/>
</dbReference>
<dbReference type="NCBIfam" id="NF002087">
    <property type="entry name" value="PRK00915.1-4"/>
    <property type="match status" value="1"/>
</dbReference>
<dbReference type="PANTHER" id="PTHR10277:SF9">
    <property type="entry name" value="2-ISOPROPYLMALATE SYNTHASE 1, CHLOROPLASTIC-RELATED"/>
    <property type="match status" value="1"/>
</dbReference>
<dbReference type="PANTHER" id="PTHR10277">
    <property type="entry name" value="HOMOCITRATE SYNTHASE-RELATED"/>
    <property type="match status" value="1"/>
</dbReference>
<dbReference type="Pfam" id="PF22617">
    <property type="entry name" value="HCS_D2"/>
    <property type="match status" value="1"/>
</dbReference>
<dbReference type="Pfam" id="PF00682">
    <property type="entry name" value="HMGL-like"/>
    <property type="match status" value="1"/>
</dbReference>
<dbReference type="Pfam" id="PF08502">
    <property type="entry name" value="LeuA_dimer"/>
    <property type="match status" value="1"/>
</dbReference>
<dbReference type="SMART" id="SM00917">
    <property type="entry name" value="LeuA_dimer"/>
    <property type="match status" value="1"/>
</dbReference>
<dbReference type="SUPFAM" id="SSF110921">
    <property type="entry name" value="2-isopropylmalate synthase LeuA, allosteric (dimerisation) domain"/>
    <property type="match status" value="1"/>
</dbReference>
<dbReference type="SUPFAM" id="SSF51569">
    <property type="entry name" value="Aldolase"/>
    <property type="match status" value="1"/>
</dbReference>
<dbReference type="PROSITE" id="PS00815">
    <property type="entry name" value="AIPM_HOMOCIT_SYNTH_1"/>
    <property type="match status" value="1"/>
</dbReference>
<dbReference type="PROSITE" id="PS00816">
    <property type="entry name" value="AIPM_HOMOCIT_SYNTH_2"/>
    <property type="match status" value="1"/>
</dbReference>
<dbReference type="PROSITE" id="PS50991">
    <property type="entry name" value="PYR_CT"/>
    <property type="match status" value="1"/>
</dbReference>
<accession>A9AJN4</accession>
<comment type="function">
    <text evidence="1">Catalyzes the condensation of the acetyl group of acetyl-CoA with 3-methyl-2-oxobutanoate (2-ketoisovalerate) to form 3-carboxy-3-hydroxy-4-methylpentanoate (2-isopropylmalate).</text>
</comment>
<comment type="catalytic activity">
    <reaction evidence="1">
        <text>3-methyl-2-oxobutanoate + acetyl-CoA + H2O = (2S)-2-isopropylmalate + CoA + H(+)</text>
        <dbReference type="Rhea" id="RHEA:21524"/>
        <dbReference type="ChEBI" id="CHEBI:1178"/>
        <dbReference type="ChEBI" id="CHEBI:11851"/>
        <dbReference type="ChEBI" id="CHEBI:15377"/>
        <dbReference type="ChEBI" id="CHEBI:15378"/>
        <dbReference type="ChEBI" id="CHEBI:57287"/>
        <dbReference type="ChEBI" id="CHEBI:57288"/>
        <dbReference type="EC" id="2.3.3.13"/>
    </reaction>
</comment>
<comment type="cofactor">
    <cofactor evidence="1">
        <name>Mn(2+)</name>
        <dbReference type="ChEBI" id="CHEBI:29035"/>
    </cofactor>
</comment>
<comment type="pathway">
    <text evidence="1">Amino-acid biosynthesis; L-leucine biosynthesis; L-leucine from 3-methyl-2-oxobutanoate: step 1/4.</text>
</comment>
<comment type="subunit">
    <text evidence="1">Homodimer.</text>
</comment>
<comment type="subcellular location">
    <subcellularLocation>
        <location evidence="1">Cytoplasm</location>
    </subcellularLocation>
</comment>
<comment type="similarity">
    <text evidence="1">Belongs to the alpha-IPM synthase/homocitrate synthase family. LeuA type 1 subfamily.</text>
</comment>
<sequence>MTDKLIIFDTTLRDGEQSPGASMTKEEKIRIAKHLERMKVDVIEAGFAASSNGDFDAIHTIAGLVKDSTVCSLARANDKDIQRAADALKPANSFRIHTFIATSPLHMEKKLRMTPEQVYEQARLAVRFARKFTDNVEFSPEDGSRSDMDFLCRVLEGVIAEGATTINITDTVGYGVPEMYGNLVKTLRERIPNSDKAIFSVHCHNDLGMAVANSLAGVMIGGARQVECTINGLGERAGNTSLEEIVMAVKTRKDYFGLDVGIDTTQIVPTSKLVSQITGFVVQPNKAVVGANAFAHASGIHQDGVLKARDTYEIMRAEDVGWTANKIVLGKLSGRNAFKQRLQELGVSLDSEAELNAAFMRFKDLADRKSEIFDEDIIAIVSQESALAQEQEHFKFVSLSQHSETGEQPHAKVVFSVDGKEVTGEARGNGPVDATLNAIESEVGSGSELLLYSVNAITTGTQAQGEVTVRLSKSGRIVNGVGTDPDIVAASAKAYIAALNKLHSKDDKLNPQRS</sequence>